<accession>Q7XTJ3</accession>
<accession>A0A0N7KIH6</accession>
<name>ODPA3_ORYSJ</name>
<evidence type="ECO:0000250" key="1"/>
<evidence type="ECO:0000250" key="2">
    <source>
        <dbReference type="UniProtKB" id="P08559"/>
    </source>
</evidence>
<evidence type="ECO:0000255" key="3"/>
<evidence type="ECO:0000305" key="4"/>
<comment type="function">
    <text evidence="1">The pyruvate dehydrogenase complex catalyzes the overall conversion of pyruvate to acetyl-CoA and CO(2). It contains multiple copies of three enzymatic components: pyruvate dehydrogenase (E1), dihydrolipoamide acetyltransferase (E2) and lipoamide dehydrogenase (E3) (By similarity).</text>
</comment>
<comment type="catalytic activity">
    <reaction>
        <text>N(6)-[(R)-lipoyl]-L-lysyl-[protein] + pyruvate + H(+) = N(6)-[(R)-S(8)-acetyldihydrolipoyl]-L-lysyl-[protein] + CO2</text>
        <dbReference type="Rhea" id="RHEA:19189"/>
        <dbReference type="Rhea" id="RHEA-COMP:10474"/>
        <dbReference type="Rhea" id="RHEA-COMP:10478"/>
        <dbReference type="ChEBI" id="CHEBI:15361"/>
        <dbReference type="ChEBI" id="CHEBI:15378"/>
        <dbReference type="ChEBI" id="CHEBI:16526"/>
        <dbReference type="ChEBI" id="CHEBI:83099"/>
        <dbReference type="ChEBI" id="CHEBI:83111"/>
        <dbReference type="EC" id="1.2.4.1"/>
    </reaction>
</comment>
<comment type="cofactor">
    <cofactor evidence="2">
        <name>thiamine diphosphate</name>
        <dbReference type="ChEBI" id="CHEBI:58937"/>
    </cofactor>
    <cofactor evidence="2">
        <name>Mg(2+)</name>
        <dbReference type="ChEBI" id="CHEBI:18420"/>
    </cofactor>
</comment>
<comment type="subunit">
    <text evidence="1">Tetramer of 2 alpha and 2 beta subunits.</text>
</comment>
<comment type="subcellular location">
    <subcellularLocation>
        <location evidence="4">Plastid</location>
        <location evidence="4">Chloroplast</location>
    </subcellularLocation>
</comment>
<reference key="1">
    <citation type="journal article" date="2002" name="Nature">
        <title>Sequence and analysis of rice chromosome 4.</title>
        <authorList>
            <person name="Feng Q."/>
            <person name="Zhang Y."/>
            <person name="Hao P."/>
            <person name="Wang S."/>
            <person name="Fu G."/>
            <person name="Huang Y."/>
            <person name="Li Y."/>
            <person name="Zhu J."/>
            <person name="Liu Y."/>
            <person name="Hu X."/>
            <person name="Jia P."/>
            <person name="Zhang Y."/>
            <person name="Zhao Q."/>
            <person name="Ying K."/>
            <person name="Yu S."/>
            <person name="Tang Y."/>
            <person name="Weng Q."/>
            <person name="Zhang L."/>
            <person name="Lu Y."/>
            <person name="Mu J."/>
            <person name="Lu Y."/>
            <person name="Zhang L.S."/>
            <person name="Yu Z."/>
            <person name="Fan D."/>
            <person name="Liu X."/>
            <person name="Lu T."/>
            <person name="Li C."/>
            <person name="Wu Y."/>
            <person name="Sun T."/>
            <person name="Lei H."/>
            <person name="Li T."/>
            <person name="Hu H."/>
            <person name="Guan J."/>
            <person name="Wu M."/>
            <person name="Zhang R."/>
            <person name="Zhou B."/>
            <person name="Chen Z."/>
            <person name="Chen L."/>
            <person name="Jin Z."/>
            <person name="Wang R."/>
            <person name="Yin H."/>
            <person name="Cai Z."/>
            <person name="Ren S."/>
            <person name="Lv G."/>
            <person name="Gu W."/>
            <person name="Zhu G."/>
            <person name="Tu Y."/>
            <person name="Jia J."/>
            <person name="Zhang Y."/>
            <person name="Chen J."/>
            <person name="Kang H."/>
            <person name="Chen X."/>
            <person name="Shao C."/>
            <person name="Sun Y."/>
            <person name="Hu Q."/>
            <person name="Zhang X."/>
            <person name="Zhang W."/>
            <person name="Wang L."/>
            <person name="Ding C."/>
            <person name="Sheng H."/>
            <person name="Gu J."/>
            <person name="Chen S."/>
            <person name="Ni L."/>
            <person name="Zhu F."/>
            <person name="Chen W."/>
            <person name="Lan L."/>
            <person name="Lai Y."/>
            <person name="Cheng Z."/>
            <person name="Gu M."/>
            <person name="Jiang J."/>
            <person name="Li J."/>
            <person name="Hong G."/>
            <person name="Xue Y."/>
            <person name="Han B."/>
        </authorList>
    </citation>
    <scope>NUCLEOTIDE SEQUENCE [LARGE SCALE GENOMIC DNA]</scope>
    <source>
        <strain>cv. Nipponbare</strain>
    </source>
</reference>
<reference key="2">
    <citation type="journal article" date="2005" name="Nature">
        <title>The map-based sequence of the rice genome.</title>
        <authorList>
            <consortium name="International rice genome sequencing project (IRGSP)"/>
        </authorList>
    </citation>
    <scope>NUCLEOTIDE SEQUENCE [LARGE SCALE GENOMIC DNA]</scope>
    <source>
        <strain>cv. Nipponbare</strain>
    </source>
</reference>
<reference key="3">
    <citation type="journal article" date="2008" name="Nucleic Acids Res.">
        <title>The rice annotation project database (RAP-DB): 2008 update.</title>
        <authorList>
            <consortium name="The rice annotation project (RAP)"/>
        </authorList>
    </citation>
    <scope>GENOME REANNOTATION</scope>
    <source>
        <strain>cv. Nipponbare</strain>
    </source>
</reference>
<reference key="4">
    <citation type="journal article" date="2013" name="Rice">
        <title>Improvement of the Oryza sativa Nipponbare reference genome using next generation sequence and optical map data.</title>
        <authorList>
            <person name="Kawahara Y."/>
            <person name="de la Bastide M."/>
            <person name="Hamilton J.P."/>
            <person name="Kanamori H."/>
            <person name="McCombie W.R."/>
            <person name="Ouyang S."/>
            <person name="Schwartz D.C."/>
            <person name="Tanaka T."/>
            <person name="Wu J."/>
            <person name="Zhou S."/>
            <person name="Childs K.L."/>
            <person name="Davidson R.M."/>
            <person name="Lin H."/>
            <person name="Quesada-Ocampo L."/>
            <person name="Vaillancourt B."/>
            <person name="Sakai H."/>
            <person name="Lee S.S."/>
            <person name="Kim J."/>
            <person name="Numa H."/>
            <person name="Itoh T."/>
            <person name="Buell C.R."/>
            <person name="Matsumoto T."/>
        </authorList>
    </citation>
    <scope>GENOME REANNOTATION</scope>
    <source>
        <strain>cv. Nipponbare</strain>
    </source>
</reference>
<reference key="5">
    <citation type="journal article" date="2005" name="PLoS Biol.">
        <title>The genomes of Oryza sativa: a history of duplications.</title>
        <authorList>
            <person name="Yu J."/>
            <person name="Wang J."/>
            <person name="Lin W."/>
            <person name="Li S."/>
            <person name="Li H."/>
            <person name="Zhou J."/>
            <person name="Ni P."/>
            <person name="Dong W."/>
            <person name="Hu S."/>
            <person name="Zeng C."/>
            <person name="Zhang J."/>
            <person name="Zhang Y."/>
            <person name="Li R."/>
            <person name="Xu Z."/>
            <person name="Li S."/>
            <person name="Li X."/>
            <person name="Zheng H."/>
            <person name="Cong L."/>
            <person name="Lin L."/>
            <person name="Yin J."/>
            <person name="Geng J."/>
            <person name="Li G."/>
            <person name="Shi J."/>
            <person name="Liu J."/>
            <person name="Lv H."/>
            <person name="Li J."/>
            <person name="Wang J."/>
            <person name="Deng Y."/>
            <person name="Ran L."/>
            <person name="Shi X."/>
            <person name="Wang X."/>
            <person name="Wu Q."/>
            <person name="Li C."/>
            <person name="Ren X."/>
            <person name="Wang J."/>
            <person name="Wang X."/>
            <person name="Li D."/>
            <person name="Liu D."/>
            <person name="Zhang X."/>
            <person name="Ji Z."/>
            <person name="Zhao W."/>
            <person name="Sun Y."/>
            <person name="Zhang Z."/>
            <person name="Bao J."/>
            <person name="Han Y."/>
            <person name="Dong L."/>
            <person name="Ji J."/>
            <person name="Chen P."/>
            <person name="Wu S."/>
            <person name="Liu J."/>
            <person name="Xiao Y."/>
            <person name="Bu D."/>
            <person name="Tan J."/>
            <person name="Yang L."/>
            <person name="Ye C."/>
            <person name="Zhang J."/>
            <person name="Xu J."/>
            <person name="Zhou Y."/>
            <person name="Yu Y."/>
            <person name="Zhang B."/>
            <person name="Zhuang S."/>
            <person name="Wei H."/>
            <person name="Liu B."/>
            <person name="Lei M."/>
            <person name="Yu H."/>
            <person name="Li Y."/>
            <person name="Xu H."/>
            <person name="Wei S."/>
            <person name="He X."/>
            <person name="Fang L."/>
            <person name="Zhang Z."/>
            <person name="Zhang Y."/>
            <person name="Huang X."/>
            <person name="Su Z."/>
            <person name="Tong W."/>
            <person name="Li J."/>
            <person name="Tong Z."/>
            <person name="Li S."/>
            <person name="Ye J."/>
            <person name="Wang L."/>
            <person name="Fang L."/>
            <person name="Lei T."/>
            <person name="Chen C.-S."/>
            <person name="Chen H.-C."/>
            <person name="Xu Z."/>
            <person name="Li H."/>
            <person name="Huang H."/>
            <person name="Zhang F."/>
            <person name="Xu H."/>
            <person name="Li N."/>
            <person name="Zhao C."/>
            <person name="Li S."/>
            <person name="Dong L."/>
            <person name="Huang Y."/>
            <person name="Li L."/>
            <person name="Xi Y."/>
            <person name="Qi Q."/>
            <person name="Li W."/>
            <person name="Zhang B."/>
            <person name="Hu W."/>
            <person name="Zhang Y."/>
            <person name="Tian X."/>
            <person name="Jiao Y."/>
            <person name="Liang X."/>
            <person name="Jin J."/>
            <person name="Gao L."/>
            <person name="Zheng W."/>
            <person name="Hao B."/>
            <person name="Liu S.-M."/>
            <person name="Wang W."/>
            <person name="Yuan L."/>
            <person name="Cao M."/>
            <person name="McDermott J."/>
            <person name="Samudrala R."/>
            <person name="Wang J."/>
            <person name="Wong G.K.-S."/>
            <person name="Yang H."/>
        </authorList>
    </citation>
    <scope>NUCLEOTIDE SEQUENCE [LARGE SCALE GENOMIC DNA]</scope>
    <source>
        <strain>cv. Nipponbare</strain>
    </source>
</reference>
<reference key="6">
    <citation type="journal article" date="2003" name="Science">
        <title>Collection, mapping, and annotation of over 28,000 cDNA clones from japonica rice.</title>
        <authorList>
            <consortium name="The rice full-length cDNA consortium"/>
        </authorList>
    </citation>
    <scope>NUCLEOTIDE SEQUENCE [LARGE SCALE MRNA]</scope>
    <source>
        <strain>cv. Nipponbare</strain>
    </source>
</reference>
<sequence>MAAASSFTAAAKFLAPVSARSAGDYKPPLPLPASASLRPGRKPAPRLRTALAVSSDVLPGNKAAPAAAAHSAVTREEALELYEDMVLGRIFEDMCAQMYYRGKMFGFVHLYNGQEAVSTGFIKLLNQADCVVSTYRDHVHALSKGVPARSVMAELFGKATGCCRGQGGSMHMFSEPHNLLGGFAFIGEGIPVATGAAFAAKYRHEVLKQSSPDGLDVTLAFFGDGTCNNGQFFECLNMAQLWKLPIVFVVENNLWAIGMSHLRATSDPEIYKKGPAFGMPGVHVDGMDVLKVREVAKEAIERARRGEGPTLVECETYRFRGHSLADPDELRRPDEKSHYAARDPITALKKYIIEQNLATESELKSIEKKIDDVVEEAVEFADASPLPPRSQLLENVFSDPKGFGIGPDGKYRCEDPLFTQGTAQV</sequence>
<protein>
    <recommendedName>
        <fullName>Pyruvate dehydrogenase E1 component subunit alpha-3, chloroplastic</fullName>
        <ecNumber>1.2.4.1</ecNumber>
    </recommendedName>
</protein>
<organism>
    <name type="scientific">Oryza sativa subsp. japonica</name>
    <name type="common">Rice</name>
    <dbReference type="NCBI Taxonomy" id="39947"/>
    <lineage>
        <taxon>Eukaryota</taxon>
        <taxon>Viridiplantae</taxon>
        <taxon>Streptophyta</taxon>
        <taxon>Embryophyta</taxon>
        <taxon>Tracheophyta</taxon>
        <taxon>Spermatophyta</taxon>
        <taxon>Magnoliopsida</taxon>
        <taxon>Liliopsida</taxon>
        <taxon>Poales</taxon>
        <taxon>Poaceae</taxon>
        <taxon>BOP clade</taxon>
        <taxon>Oryzoideae</taxon>
        <taxon>Oryzeae</taxon>
        <taxon>Oryzinae</taxon>
        <taxon>Oryza</taxon>
        <taxon>Oryza sativa</taxon>
    </lineage>
</organism>
<dbReference type="EC" id="1.2.4.1"/>
<dbReference type="EMBL" id="AL606450">
    <property type="protein sequence ID" value="CAE01294.2"/>
    <property type="molecule type" value="Genomic_DNA"/>
</dbReference>
<dbReference type="EMBL" id="AP008210">
    <property type="protein sequence ID" value="BAF13979.1"/>
    <property type="molecule type" value="Genomic_DNA"/>
</dbReference>
<dbReference type="EMBL" id="AP014960">
    <property type="protein sequence ID" value="BAS87641.1"/>
    <property type="molecule type" value="Genomic_DNA"/>
</dbReference>
<dbReference type="EMBL" id="CM000141">
    <property type="protein sequence ID" value="EAZ29517.1"/>
    <property type="molecule type" value="Genomic_DNA"/>
</dbReference>
<dbReference type="EMBL" id="AK069299">
    <property type="protein sequence ID" value="BAG91364.1"/>
    <property type="molecule type" value="mRNA"/>
</dbReference>
<dbReference type="RefSeq" id="XP_015636508.1">
    <property type="nucleotide sequence ID" value="XM_015781022.1"/>
</dbReference>
<dbReference type="SMR" id="Q7XTJ3"/>
<dbReference type="FunCoup" id="Q7XTJ3">
    <property type="interactions" value="779"/>
</dbReference>
<dbReference type="STRING" id="39947.Q7XTJ3"/>
<dbReference type="PaxDb" id="39947-Q7XTJ3"/>
<dbReference type="EnsemblPlants" id="Os04t0119400-01">
    <property type="protein sequence ID" value="Os04t0119400-01"/>
    <property type="gene ID" value="Os04g0119400"/>
</dbReference>
<dbReference type="Gramene" id="Os04t0119400-01">
    <property type="protein sequence ID" value="Os04t0119400-01"/>
    <property type="gene ID" value="Os04g0119400"/>
</dbReference>
<dbReference type="KEGG" id="dosa:Os04g0119400"/>
<dbReference type="eggNOG" id="KOG0225">
    <property type="taxonomic scope" value="Eukaryota"/>
</dbReference>
<dbReference type="HOGENOM" id="CLU_029393_5_1_1"/>
<dbReference type="InParanoid" id="Q7XTJ3"/>
<dbReference type="OMA" id="FCSTYRD"/>
<dbReference type="OrthoDB" id="10256198at2759"/>
<dbReference type="Proteomes" id="UP000000763">
    <property type="component" value="Chromosome 4"/>
</dbReference>
<dbReference type="Proteomes" id="UP000007752">
    <property type="component" value="Chromosome 4"/>
</dbReference>
<dbReference type="Proteomes" id="UP000059680">
    <property type="component" value="Chromosome 4"/>
</dbReference>
<dbReference type="GO" id="GO:0009507">
    <property type="term" value="C:chloroplast"/>
    <property type="evidence" value="ECO:0007669"/>
    <property type="project" value="UniProtKB-SubCell"/>
</dbReference>
<dbReference type="GO" id="GO:0046872">
    <property type="term" value="F:metal ion binding"/>
    <property type="evidence" value="ECO:0007669"/>
    <property type="project" value="UniProtKB-KW"/>
</dbReference>
<dbReference type="GO" id="GO:0004739">
    <property type="term" value="F:pyruvate dehydrogenase (acetyl-transferring) activity"/>
    <property type="evidence" value="ECO:0000318"/>
    <property type="project" value="GO_Central"/>
</dbReference>
<dbReference type="GO" id="GO:0006086">
    <property type="term" value="P:pyruvate decarboxylation to acetyl-CoA"/>
    <property type="evidence" value="ECO:0000318"/>
    <property type="project" value="GO_Central"/>
</dbReference>
<dbReference type="CDD" id="cd02000">
    <property type="entry name" value="TPP_E1_PDC_ADC_BCADC"/>
    <property type="match status" value="1"/>
</dbReference>
<dbReference type="FunFam" id="3.40.50.970:FF:000013">
    <property type="entry name" value="Pyruvate dehydrogenase E1 component subunit alpha"/>
    <property type="match status" value="1"/>
</dbReference>
<dbReference type="Gene3D" id="3.40.50.970">
    <property type="match status" value="1"/>
</dbReference>
<dbReference type="InterPro" id="IPR001017">
    <property type="entry name" value="DH_E1"/>
</dbReference>
<dbReference type="InterPro" id="IPR050642">
    <property type="entry name" value="PDH_E1_Alpha_Subunit"/>
</dbReference>
<dbReference type="InterPro" id="IPR017597">
    <property type="entry name" value="Pyrv_DH_E1_asu_subgrp-y"/>
</dbReference>
<dbReference type="InterPro" id="IPR029061">
    <property type="entry name" value="THDP-binding"/>
</dbReference>
<dbReference type="NCBIfam" id="TIGR03182">
    <property type="entry name" value="PDH_E1_alph_y"/>
    <property type="match status" value="1"/>
</dbReference>
<dbReference type="PANTHER" id="PTHR11516:SF60">
    <property type="entry name" value="PYRUVATE DEHYDROGENASE E1 COMPONENT SUBUNIT ALPHA"/>
    <property type="match status" value="1"/>
</dbReference>
<dbReference type="PANTHER" id="PTHR11516">
    <property type="entry name" value="PYRUVATE DEHYDROGENASE E1 COMPONENT, ALPHA SUBUNIT BACTERIAL AND ORGANELLAR"/>
    <property type="match status" value="1"/>
</dbReference>
<dbReference type="Pfam" id="PF00676">
    <property type="entry name" value="E1_dh"/>
    <property type="match status" value="1"/>
</dbReference>
<dbReference type="SUPFAM" id="SSF52518">
    <property type="entry name" value="Thiamin diphosphate-binding fold (THDP-binding)"/>
    <property type="match status" value="1"/>
</dbReference>
<feature type="transit peptide" description="Chloroplast" evidence="3">
    <location>
        <begin position="1"/>
        <end position="66"/>
    </location>
</feature>
<feature type="chain" id="PRO_0000421370" description="Pyruvate dehydrogenase E1 component subunit alpha-3, chloroplastic">
    <location>
        <begin position="67"/>
        <end position="425"/>
    </location>
</feature>
<feature type="binding site" evidence="2">
    <location>
        <position position="109"/>
    </location>
    <ligand>
        <name>pyruvate</name>
        <dbReference type="ChEBI" id="CHEBI:15361"/>
    </ligand>
</feature>
<feature type="binding site" evidence="2">
    <location>
        <position position="135"/>
    </location>
    <ligand>
        <name>pyruvate</name>
        <dbReference type="ChEBI" id="CHEBI:15361"/>
    </ligand>
</feature>
<feature type="binding site" evidence="2">
    <location>
        <position position="135"/>
    </location>
    <ligand>
        <name>thiamine diphosphate</name>
        <dbReference type="ChEBI" id="CHEBI:58937"/>
        <note>ligand shared with beta subunit</note>
    </ligand>
</feature>
<feature type="binding site" evidence="2">
    <location>
        <position position="136"/>
    </location>
    <ligand>
        <name>pyruvate</name>
        <dbReference type="ChEBI" id="CHEBI:15361"/>
    </ligand>
</feature>
<feature type="binding site" evidence="2">
    <location>
        <position position="136"/>
    </location>
    <ligand>
        <name>thiamine diphosphate</name>
        <dbReference type="ChEBI" id="CHEBI:58937"/>
        <note>ligand shared with beta subunit</note>
    </ligand>
</feature>
<feature type="binding site" evidence="2">
    <location>
        <position position="184"/>
    </location>
    <ligand>
        <name>pyruvate</name>
        <dbReference type="ChEBI" id="CHEBI:15361"/>
    </ligand>
</feature>
<feature type="binding site" evidence="2">
    <location>
        <position position="184"/>
    </location>
    <ligand>
        <name>thiamine diphosphate</name>
        <dbReference type="ChEBI" id="CHEBI:58937"/>
        <note>ligand shared with beta subunit</note>
    </ligand>
</feature>
<feature type="binding site" evidence="2">
    <location>
        <position position="186"/>
    </location>
    <ligand>
        <name>pyruvate</name>
        <dbReference type="ChEBI" id="CHEBI:15361"/>
    </ligand>
</feature>
<feature type="binding site" evidence="2">
    <location>
        <position position="186"/>
    </location>
    <ligand>
        <name>thiamine diphosphate</name>
        <dbReference type="ChEBI" id="CHEBI:58937"/>
        <note>ligand shared with beta subunit</note>
    </ligand>
</feature>
<feature type="binding site" evidence="2">
    <location>
        <position position="224"/>
    </location>
    <ligand>
        <name>Mg(2+)</name>
        <dbReference type="ChEBI" id="CHEBI:18420"/>
    </ligand>
</feature>
<feature type="binding site" evidence="2">
    <location>
        <position position="224"/>
    </location>
    <ligand>
        <name>pyruvate</name>
        <dbReference type="ChEBI" id="CHEBI:15361"/>
    </ligand>
</feature>
<feature type="binding site" evidence="2">
    <location>
        <position position="224"/>
    </location>
    <ligand>
        <name>thiamine diphosphate</name>
        <dbReference type="ChEBI" id="CHEBI:58937"/>
        <note>ligand shared with beta subunit</note>
    </ligand>
</feature>
<feature type="binding site" evidence="2">
    <location>
        <position position="225"/>
    </location>
    <ligand>
        <name>pyruvate</name>
        <dbReference type="ChEBI" id="CHEBI:15361"/>
    </ligand>
</feature>
<feature type="binding site" evidence="2">
    <location>
        <position position="225"/>
    </location>
    <ligand>
        <name>thiamine diphosphate</name>
        <dbReference type="ChEBI" id="CHEBI:58937"/>
        <note>ligand shared with beta subunit</note>
    </ligand>
</feature>
<feature type="binding site" evidence="2">
    <location>
        <position position="253"/>
    </location>
    <ligand>
        <name>Mg(2+)</name>
        <dbReference type="ChEBI" id="CHEBI:18420"/>
    </ligand>
</feature>
<feature type="binding site" evidence="2">
    <location>
        <position position="253"/>
    </location>
    <ligand>
        <name>pyruvate</name>
        <dbReference type="ChEBI" id="CHEBI:15361"/>
    </ligand>
</feature>
<feature type="binding site" evidence="2">
    <location>
        <position position="253"/>
    </location>
    <ligand>
        <name>thiamine diphosphate</name>
        <dbReference type="ChEBI" id="CHEBI:58937"/>
        <note>ligand shared with beta subunit</note>
    </ligand>
</feature>
<feature type="binding site" evidence="2">
    <location>
        <position position="322"/>
    </location>
    <ligand>
        <name>thiamine diphosphate</name>
        <dbReference type="ChEBI" id="CHEBI:58937"/>
        <note>ligand shared with beta subunit</note>
    </ligand>
</feature>
<keyword id="KW-0150">Chloroplast</keyword>
<keyword id="KW-0460">Magnesium</keyword>
<keyword id="KW-0479">Metal-binding</keyword>
<keyword id="KW-0560">Oxidoreductase</keyword>
<keyword id="KW-0934">Plastid</keyword>
<keyword id="KW-0670">Pyruvate</keyword>
<keyword id="KW-1185">Reference proteome</keyword>
<keyword id="KW-0786">Thiamine pyrophosphate</keyword>
<keyword id="KW-0809">Transit peptide</keyword>
<gene>
    <name type="ordered locus">Os04g0119400</name>
    <name type="ordered locus">LOC_Os04g02900</name>
    <name type="ORF">OsJ_13591</name>
    <name type="ORF">OSJNBa0020P07.11</name>
</gene>
<proteinExistence type="evidence at transcript level"/>